<proteinExistence type="predicted"/>
<dbReference type="EMBL" id="U28867">
    <property type="protein sequence ID" value="AAC62523.1"/>
    <property type="molecule type" value="Genomic_DNA"/>
</dbReference>
<dbReference type="EMBL" id="AE005673">
    <property type="protein sequence ID" value="AAK23438.1"/>
    <property type="molecule type" value="Genomic_DNA"/>
</dbReference>
<dbReference type="EMBL" id="X15134">
    <property type="protein sequence ID" value="CAA33229.1"/>
    <property type="molecule type" value="Genomic_DNA"/>
</dbReference>
<dbReference type="PIR" id="B87430">
    <property type="entry name" value="B87430"/>
</dbReference>
<dbReference type="PIR" id="JQ0744">
    <property type="entry name" value="JQ0744"/>
</dbReference>
<dbReference type="RefSeq" id="NP_420270.1">
    <property type="nucleotide sequence ID" value="NC_002696.2"/>
</dbReference>
<dbReference type="RefSeq" id="WP_010919333.1">
    <property type="nucleotide sequence ID" value="NC_002696.2"/>
</dbReference>
<dbReference type="SMR" id="P21296"/>
<dbReference type="STRING" id="190650.CC_1457"/>
<dbReference type="EnsemblBacteria" id="AAK23438">
    <property type="protein sequence ID" value="AAK23438"/>
    <property type="gene ID" value="CC_1457"/>
</dbReference>
<dbReference type="KEGG" id="ccr:CC_1457"/>
<dbReference type="PATRIC" id="fig|190650.5.peg.1483"/>
<dbReference type="eggNOG" id="COG0457">
    <property type="taxonomic scope" value="Bacteria"/>
</dbReference>
<dbReference type="eggNOG" id="COG0859">
    <property type="taxonomic scope" value="Bacteria"/>
</dbReference>
<dbReference type="HOGENOM" id="CLU_010140_1_1_5"/>
<dbReference type="BioCyc" id="CAULO:CC1457-MONOMER"/>
<dbReference type="Proteomes" id="UP000001816">
    <property type="component" value="Chromosome"/>
</dbReference>
<dbReference type="GO" id="GO:0044781">
    <property type="term" value="P:bacterial-type flagellum organization"/>
    <property type="evidence" value="ECO:0007669"/>
    <property type="project" value="UniProtKB-KW"/>
</dbReference>
<dbReference type="Gene3D" id="3.40.50.2000">
    <property type="entry name" value="Glycogen Phosphorylase B"/>
    <property type="match status" value="1"/>
</dbReference>
<dbReference type="Gene3D" id="1.25.40.10">
    <property type="entry name" value="Tetratricopeptide repeat domain"/>
    <property type="match status" value="1"/>
</dbReference>
<dbReference type="InterPro" id="IPR011990">
    <property type="entry name" value="TPR-like_helical_dom_sf"/>
</dbReference>
<dbReference type="InterPro" id="IPR019734">
    <property type="entry name" value="TPR_rpt"/>
</dbReference>
<dbReference type="InterPro" id="IPR050498">
    <property type="entry name" value="Ycf3"/>
</dbReference>
<dbReference type="PANTHER" id="PTHR44858:SF17">
    <property type="match status" value="1"/>
</dbReference>
<dbReference type="PANTHER" id="PTHR44858">
    <property type="entry name" value="TETRATRICOPEPTIDE REPEAT PROTEIN 6"/>
    <property type="match status" value="1"/>
</dbReference>
<dbReference type="Pfam" id="PF14559">
    <property type="entry name" value="TPR_19"/>
    <property type="match status" value="1"/>
</dbReference>
<dbReference type="Pfam" id="PF13181">
    <property type="entry name" value="TPR_8"/>
    <property type="match status" value="1"/>
</dbReference>
<dbReference type="SMART" id="SM00028">
    <property type="entry name" value="TPR"/>
    <property type="match status" value="4"/>
</dbReference>
<dbReference type="SUPFAM" id="SSF48439">
    <property type="entry name" value="Protein prenylyltransferase"/>
    <property type="match status" value="1"/>
</dbReference>
<dbReference type="SUPFAM" id="SSF53756">
    <property type="entry name" value="UDP-Glycosyltransferase/glycogen phosphorylase"/>
    <property type="match status" value="1"/>
</dbReference>
<dbReference type="PROSITE" id="PS50005">
    <property type="entry name" value="TPR"/>
    <property type="match status" value="3"/>
</dbReference>
<dbReference type="PROSITE" id="PS50293">
    <property type="entry name" value="TPR_REGION"/>
    <property type="match status" value="1"/>
</dbReference>
<organism>
    <name type="scientific">Caulobacter vibrioides (strain ATCC 19089 / CIP 103742 / CB 15)</name>
    <name type="common">Caulobacter crescentus</name>
    <dbReference type="NCBI Taxonomy" id="190650"/>
    <lineage>
        <taxon>Bacteria</taxon>
        <taxon>Pseudomonadati</taxon>
        <taxon>Pseudomonadota</taxon>
        <taxon>Alphaproteobacteria</taxon>
        <taxon>Caulobacterales</taxon>
        <taxon>Caulobacteraceae</taxon>
        <taxon>Caulobacter</taxon>
    </lineage>
</organism>
<reference key="1">
    <citation type="journal article" date="1998" name="J. Bacteriol.">
        <title>A new class of Caulobacter crescentus flagellar genes.</title>
        <authorList>
            <person name="Leclerc G."/>
            <person name="Wang S.P."/>
            <person name="Ely B."/>
        </authorList>
    </citation>
    <scope>NUCLEOTIDE SEQUENCE [GENOMIC DNA]</scope>
    <source>
        <strain>ATCC 19089 / CIP 103742 / CB 15</strain>
    </source>
</reference>
<reference key="2">
    <citation type="journal article" date="2001" name="Proc. Natl. Acad. Sci. U.S.A.">
        <title>Complete genome sequence of Caulobacter crescentus.</title>
        <authorList>
            <person name="Nierman W.C."/>
            <person name="Feldblyum T.V."/>
            <person name="Laub M.T."/>
            <person name="Paulsen I.T."/>
            <person name="Nelson K.E."/>
            <person name="Eisen J.A."/>
            <person name="Heidelberg J.F."/>
            <person name="Alley M.R.K."/>
            <person name="Ohta N."/>
            <person name="Maddock J.R."/>
            <person name="Potocka I."/>
            <person name="Nelson W.C."/>
            <person name="Newton A."/>
            <person name="Stephens C."/>
            <person name="Phadke N.D."/>
            <person name="Ely B."/>
            <person name="DeBoy R.T."/>
            <person name="Dodson R.J."/>
            <person name="Durkin A.S."/>
            <person name="Gwinn M.L."/>
            <person name="Haft D.H."/>
            <person name="Kolonay J.F."/>
            <person name="Smit J."/>
            <person name="Craven M.B."/>
            <person name="Khouri H.M."/>
            <person name="Shetty J."/>
            <person name="Berry K.J."/>
            <person name="Utterback T.R."/>
            <person name="Tran K."/>
            <person name="Wolf A.M."/>
            <person name="Vamathevan J.J."/>
            <person name="Ermolaeva M.D."/>
            <person name="White O."/>
            <person name="Salzberg S.L."/>
            <person name="Venter J.C."/>
            <person name="Shapiro L."/>
            <person name="Fraser C.M."/>
        </authorList>
    </citation>
    <scope>NUCLEOTIDE SEQUENCE [LARGE SCALE GENOMIC DNA]</scope>
    <source>
        <strain>ATCC 19089 / CIP 103742 / CB 15</strain>
    </source>
</reference>
<reference key="3">
    <citation type="journal article" date="1990" name="Gene">
        <title>Nucleotide sequence of the Caulobacter crescentus flaF and flbT genes and an analysis of codon usage in organisms with G + C-rich genomes.</title>
        <authorList>
            <person name="Schoenlein P.V."/>
            <person name="Gallman L.S."/>
            <person name="Winkler M.E."/>
            <person name="Ely B."/>
        </authorList>
    </citation>
    <scope>NUCLEOTIDE SEQUENCE [GENOMIC DNA] OF 1-56</scope>
    <source>
        <strain>ATCC 19089 / CIP 103742 / CB 15</strain>
    </source>
</reference>
<sequence>MSRKSALESSASVLAQADVGASGIHPSVIADAMGDSASAEALERLNRAAQDTKNVDNAKHLARAIQAVQLQDYAKADKLALKLLEKDERLGLAWHILAIAREKTGDFASSLRAYEAALALLPDHGPVAGDLGRLAFRMNMPELAAKFFAHYRLARPDDVEGANNLACALRELNRESEAIEVLKAALGANPEAAVLWNTLGTVLCNIGDAAGSIVFFDESLRLAPDFSKAYHNRAFARLDLGEIEAALADCEAAMRSPGSPEDLAMMQFARATILLALGRVGEGWEAYESRFSPALSDAPRFQIPGVRWSGQDLRGKRLMITTEQGLGDEVMFANMLPDIVEALGPDGFLSLAVERRLAPLFERTFPKVEVTAHRTIAYEGRVFRAAPYIENWDRFDYWAAIGDFLPSLRPTAEAFPKRNAFLQPDPARVAHWKAQLEKLGPGPKVGLLWKSLKLNAERARQFSPFHLWEPVLHTPGVVFVNLQYGDCEEEIAFAKEELGVEIWQPEGIDLKADLDDVAALCAAVDLVIGFSNATINLAGAVGTPIFMLTGASSWTRLGTEYYPWYPSVRCFVTEQYGVWEPTMGRVATALRDFAAS</sequence>
<keyword id="KW-1005">Bacterial flagellum biogenesis</keyword>
<keyword id="KW-1185">Reference proteome</keyword>
<keyword id="KW-0677">Repeat</keyword>
<keyword id="KW-0802">TPR repeat</keyword>
<accession>P21296</accession>
<name>FLBA_CAUVC</name>
<protein>
    <recommendedName>
        <fullName>Protein FlbA</fullName>
    </recommendedName>
</protein>
<feature type="chain" id="PRO_0000106432" description="Protein FlbA">
    <location>
        <begin position="1"/>
        <end position="596"/>
    </location>
</feature>
<feature type="repeat" description="TPR 1">
    <location>
        <begin position="91"/>
        <end position="124"/>
    </location>
</feature>
<feature type="repeat" description="TPR 2">
    <location>
        <begin position="159"/>
        <end position="192"/>
    </location>
</feature>
<feature type="repeat" description="TPR 3">
    <location>
        <begin position="193"/>
        <end position="226"/>
    </location>
</feature>
<feature type="repeat" description="TPR 4">
    <location>
        <begin position="228"/>
        <end position="260"/>
    </location>
</feature>
<gene>
    <name type="primary">flbA</name>
    <name type="ordered locus">CC_1457</name>
</gene>